<name>Y013_OSHVF</name>
<dbReference type="EMBL" id="AY509253">
    <property type="protein sequence ID" value="AAS00905.1"/>
    <property type="molecule type" value="Genomic_DNA"/>
</dbReference>
<dbReference type="RefSeq" id="YP_024558.1">
    <property type="nucleotide sequence ID" value="NC_005881.2"/>
</dbReference>
<dbReference type="SMR" id="Q6R7L0"/>
<dbReference type="KEGG" id="vg:2948209"/>
<dbReference type="Proteomes" id="UP000007021">
    <property type="component" value="Segment"/>
</dbReference>
<proteinExistence type="inferred from homology"/>
<organismHost>
    <name type="scientific">Magallana gigas</name>
    <name type="common">Pacific oyster</name>
    <name type="synonym">Crassostrea gigas</name>
    <dbReference type="NCBI Taxonomy" id="29159"/>
</organismHost>
<organismHost>
    <name type="scientific">Pecten maximus</name>
    <name type="common">King scallop</name>
    <name type="synonym">Pilgrim's clam</name>
    <dbReference type="NCBI Taxonomy" id="6579"/>
</organismHost>
<keyword id="KW-1185">Reference proteome</keyword>
<keyword id="KW-0732">Signal</keyword>
<sequence length="105" mass="11475">MKLVFIFATAAIMGVVVYGQGRDAGDRGKRSLSDDFISTLQELKEAMDDLPSIYAIINKHGVNICEPCSRLCDNVADTHVVCKRCRRCIGRGGIHGAVAFGMRDE</sequence>
<evidence type="ECO:0000255" key="1"/>
<feature type="signal peptide" evidence="1">
    <location>
        <begin position="1"/>
        <end position="19"/>
    </location>
</feature>
<feature type="chain" id="PRO_0000385045" description="Uncharacterized protein ORF13">
    <location>
        <begin position="20"/>
        <end position="105"/>
    </location>
</feature>
<accession>Q6R7L0</accession>
<reference key="1">
    <citation type="journal article" date="2005" name="J. Gen. Virol.">
        <title>A novel class of herpesvirus with bivalve hosts.</title>
        <authorList>
            <person name="Davison A.J."/>
            <person name="Trus B.L."/>
            <person name="Cheng N."/>
            <person name="Steven A.C."/>
            <person name="Watson M.S."/>
            <person name="Cunningham C."/>
            <person name="Le Deuff R.M."/>
            <person name="Renault T."/>
        </authorList>
    </citation>
    <scope>NUCLEOTIDE SEQUENCE [LARGE SCALE GENOMIC DNA]</scope>
</reference>
<organism>
    <name type="scientific">Ostreid herpesvirus 1 (isolate France)</name>
    <name type="common">OsHV-1</name>
    <name type="synonym">Pacific oyster herpesvirus</name>
    <dbReference type="NCBI Taxonomy" id="654903"/>
    <lineage>
        <taxon>Viruses</taxon>
        <taxon>Duplodnaviria</taxon>
        <taxon>Heunggongvirae</taxon>
        <taxon>Peploviricota</taxon>
        <taxon>Herviviricetes</taxon>
        <taxon>Herpesvirales</taxon>
        <taxon>Malacoherpesviridae</taxon>
        <taxon>Ostreavirus</taxon>
        <taxon>Ostreavirus ostreidmalaco1</taxon>
        <taxon>Ostreid herpesvirus 1</taxon>
    </lineage>
</organism>
<protein>
    <recommendedName>
        <fullName>Uncharacterized protein ORF13</fullName>
    </recommendedName>
</protein>
<gene>
    <name type="ORF">ORF13</name>
</gene>